<organism>
    <name type="scientific">Streptococcus pyogenes serotype M12 (strain MGAS2096)</name>
    <dbReference type="NCBI Taxonomy" id="370553"/>
    <lineage>
        <taxon>Bacteria</taxon>
        <taxon>Bacillati</taxon>
        <taxon>Bacillota</taxon>
        <taxon>Bacilli</taxon>
        <taxon>Lactobacillales</taxon>
        <taxon>Streptococcaceae</taxon>
        <taxon>Streptococcus</taxon>
    </lineage>
</organism>
<comment type="function">
    <text evidence="1">The heterodimer acts as both an ATP-dependent DNA helicase and an ATP-dependent, dual-direction single-stranded exonuclease. Recognizes the chi site generating a DNA molecule suitable for the initiation of homologous recombination. The AddA nuclease domain is required for chi fragment generation; this subunit has the helicase and 3' -&gt; 5' nuclease activities.</text>
</comment>
<comment type="catalytic activity">
    <reaction evidence="1">
        <text>Couples ATP hydrolysis with the unwinding of duplex DNA by translocating in the 3'-5' direction.</text>
        <dbReference type="EC" id="5.6.2.4"/>
    </reaction>
</comment>
<comment type="catalytic activity">
    <reaction evidence="1">
        <text>ATP + H2O = ADP + phosphate + H(+)</text>
        <dbReference type="Rhea" id="RHEA:13065"/>
        <dbReference type="ChEBI" id="CHEBI:15377"/>
        <dbReference type="ChEBI" id="CHEBI:15378"/>
        <dbReference type="ChEBI" id="CHEBI:30616"/>
        <dbReference type="ChEBI" id="CHEBI:43474"/>
        <dbReference type="ChEBI" id="CHEBI:456216"/>
        <dbReference type="EC" id="5.6.2.4"/>
    </reaction>
</comment>
<comment type="cofactor">
    <cofactor evidence="1">
        <name>Mg(2+)</name>
        <dbReference type="ChEBI" id="CHEBI:18420"/>
    </cofactor>
</comment>
<comment type="subunit">
    <text evidence="1">Heterodimer of AddA and AddB/RexB.</text>
</comment>
<comment type="similarity">
    <text evidence="1">Belongs to the helicase family. AddA subfamily.</text>
</comment>
<comment type="sequence caution" evidence="2">
    <conflict type="frameshift">
        <sequence resource="EMBL-CDS" id="ABF35710"/>
    </conflict>
</comment>
<comment type="sequence caution" evidence="2">
    <conflict type="erroneous initiation">
        <sequence resource="EMBL-CDS" id="ABF35711"/>
    </conflict>
</comment>
<name>ADDA_STRPB</name>
<gene>
    <name evidence="1" type="primary">addA</name>
    <name type="synonym">rexA</name>
    <name type="ordered locus">MGAS2096_Spy0658/MGAS2096_Spy0659</name>
</gene>
<feature type="chain" id="PRO_0000379341" description="ATP-dependent helicase/nuclease subunit A">
    <location>
        <begin position="1"/>
        <end position="1222"/>
    </location>
</feature>
<feature type="domain" description="UvrD-like helicase ATP-binding" evidence="1">
    <location>
        <begin position="39"/>
        <end position="495"/>
    </location>
</feature>
<feature type="domain" description="UvrD-like helicase C-terminal" evidence="1">
    <location>
        <begin position="524"/>
        <end position="810"/>
    </location>
</feature>
<feature type="binding site" evidence="1">
    <location>
        <begin position="60"/>
        <end position="67"/>
    </location>
    <ligand>
        <name>ATP</name>
        <dbReference type="ChEBI" id="CHEBI:30616"/>
    </ligand>
</feature>
<dbReference type="EC" id="3.1.-.-" evidence="1"/>
<dbReference type="EC" id="5.6.2.4" evidence="1"/>
<dbReference type="EMBL" id="CP000261">
    <property type="protein sequence ID" value="ABF35710.1"/>
    <property type="status" value="ALT_FRAME"/>
    <property type="molecule type" value="Genomic_DNA"/>
</dbReference>
<dbReference type="EMBL" id="CP000261">
    <property type="protein sequence ID" value="ABF35711.1"/>
    <property type="status" value="ALT_INIT"/>
    <property type="molecule type" value="Genomic_DNA"/>
</dbReference>
<dbReference type="SMR" id="Q1JCJ8"/>
<dbReference type="KEGG" id="spj:MGAS2096_Spy0658"/>
<dbReference type="KEGG" id="spj:MGAS2096_Spy0659"/>
<dbReference type="HOGENOM" id="CLU_001114_3_1_9"/>
<dbReference type="GO" id="GO:0005829">
    <property type="term" value="C:cytosol"/>
    <property type="evidence" value="ECO:0007669"/>
    <property type="project" value="TreeGrafter"/>
</dbReference>
<dbReference type="GO" id="GO:0033202">
    <property type="term" value="C:DNA helicase complex"/>
    <property type="evidence" value="ECO:0007669"/>
    <property type="project" value="TreeGrafter"/>
</dbReference>
<dbReference type="GO" id="GO:0043138">
    <property type="term" value="F:3'-5' DNA helicase activity"/>
    <property type="evidence" value="ECO:0007669"/>
    <property type="project" value="UniProtKB-UniRule"/>
</dbReference>
<dbReference type="GO" id="GO:0008408">
    <property type="term" value="F:3'-5' exonuclease activity"/>
    <property type="evidence" value="ECO:0007669"/>
    <property type="project" value="UniProtKB-UniRule"/>
</dbReference>
<dbReference type="GO" id="GO:0005524">
    <property type="term" value="F:ATP binding"/>
    <property type="evidence" value="ECO:0007669"/>
    <property type="project" value="UniProtKB-UniRule"/>
</dbReference>
<dbReference type="GO" id="GO:0016887">
    <property type="term" value="F:ATP hydrolysis activity"/>
    <property type="evidence" value="ECO:0007669"/>
    <property type="project" value="RHEA"/>
</dbReference>
<dbReference type="GO" id="GO:0003690">
    <property type="term" value="F:double-stranded DNA binding"/>
    <property type="evidence" value="ECO:0007669"/>
    <property type="project" value="UniProtKB-UniRule"/>
</dbReference>
<dbReference type="GO" id="GO:0000724">
    <property type="term" value="P:double-strand break repair via homologous recombination"/>
    <property type="evidence" value="ECO:0007669"/>
    <property type="project" value="UniProtKB-UniRule"/>
</dbReference>
<dbReference type="CDD" id="cd17932">
    <property type="entry name" value="DEXQc_UvrD"/>
    <property type="match status" value="1"/>
</dbReference>
<dbReference type="Gene3D" id="3.90.320.10">
    <property type="match status" value="1"/>
</dbReference>
<dbReference type="Gene3D" id="3.40.50.300">
    <property type="entry name" value="P-loop containing nucleotide triphosphate hydrolases"/>
    <property type="match status" value="4"/>
</dbReference>
<dbReference type="Gene3D" id="1.10.486.10">
    <property type="entry name" value="PCRA, domain 4"/>
    <property type="match status" value="1"/>
</dbReference>
<dbReference type="HAMAP" id="MF_01451">
    <property type="entry name" value="AddA"/>
    <property type="match status" value="1"/>
</dbReference>
<dbReference type="InterPro" id="IPR014152">
    <property type="entry name" value="AddA"/>
</dbReference>
<dbReference type="InterPro" id="IPR014017">
    <property type="entry name" value="DNA_helicase_UvrD-like_C"/>
</dbReference>
<dbReference type="InterPro" id="IPR000212">
    <property type="entry name" value="DNA_helicase_UvrD/REP"/>
</dbReference>
<dbReference type="InterPro" id="IPR027417">
    <property type="entry name" value="P-loop_NTPase"/>
</dbReference>
<dbReference type="InterPro" id="IPR011604">
    <property type="entry name" value="PDDEXK-like_dom_sf"/>
</dbReference>
<dbReference type="InterPro" id="IPR038726">
    <property type="entry name" value="PDDEXK_AddAB-type"/>
</dbReference>
<dbReference type="InterPro" id="IPR011335">
    <property type="entry name" value="Restrct_endonuc-II-like"/>
</dbReference>
<dbReference type="InterPro" id="IPR014016">
    <property type="entry name" value="UvrD-like_ATP-bd"/>
</dbReference>
<dbReference type="NCBIfam" id="TIGR02785">
    <property type="entry name" value="addA_Gpos"/>
    <property type="match status" value="1"/>
</dbReference>
<dbReference type="PANTHER" id="PTHR11070:SF48">
    <property type="entry name" value="ATP-DEPENDENT HELICASE_NUCLEASE SUBUNIT A"/>
    <property type="match status" value="1"/>
</dbReference>
<dbReference type="PANTHER" id="PTHR11070">
    <property type="entry name" value="UVRD / RECB / PCRA DNA HELICASE FAMILY MEMBER"/>
    <property type="match status" value="1"/>
</dbReference>
<dbReference type="Pfam" id="PF12705">
    <property type="entry name" value="PDDEXK_1"/>
    <property type="match status" value="1"/>
</dbReference>
<dbReference type="Pfam" id="PF00580">
    <property type="entry name" value="UvrD-helicase"/>
    <property type="match status" value="1"/>
</dbReference>
<dbReference type="Pfam" id="PF13361">
    <property type="entry name" value="UvrD_C"/>
    <property type="match status" value="1"/>
</dbReference>
<dbReference type="SUPFAM" id="SSF52540">
    <property type="entry name" value="P-loop containing nucleoside triphosphate hydrolases"/>
    <property type="match status" value="1"/>
</dbReference>
<dbReference type="SUPFAM" id="SSF52980">
    <property type="entry name" value="Restriction endonuclease-like"/>
    <property type="match status" value="1"/>
</dbReference>
<dbReference type="PROSITE" id="PS51198">
    <property type="entry name" value="UVRD_HELICASE_ATP_BIND"/>
    <property type="match status" value="1"/>
</dbReference>
<dbReference type="PROSITE" id="PS51217">
    <property type="entry name" value="UVRD_HELICASE_CTER"/>
    <property type="match status" value="1"/>
</dbReference>
<reference key="1">
    <citation type="journal article" date="2006" name="Proc. Natl. Acad. Sci. U.S.A.">
        <title>Molecular genetic anatomy of inter- and intraserotype variation in the human bacterial pathogen group A Streptococcus.</title>
        <authorList>
            <person name="Beres S.B."/>
            <person name="Richter E.W."/>
            <person name="Nagiec M.J."/>
            <person name="Sumby P."/>
            <person name="Porcella S.F."/>
            <person name="DeLeo F.R."/>
            <person name="Musser J.M."/>
        </authorList>
    </citation>
    <scope>NUCLEOTIDE SEQUENCE [LARGE SCALE GENOMIC DNA]</scope>
    <source>
        <strain>MGAS2096</strain>
    </source>
</reference>
<accession>Q1JCJ8</accession>
<accession>Q1JCJ7</accession>
<evidence type="ECO:0000255" key="1">
    <source>
        <dbReference type="HAMAP-Rule" id="MF_01451"/>
    </source>
</evidence>
<evidence type="ECO:0000305" key="2"/>
<proteinExistence type="inferred from homology"/>
<sequence length="1222" mass="140267">MLFNINEKGEPLVISFAPFLSPEAIKHLQENERCSDQSQKRTAQQIEAIYTSGQNILVSASAGSGKTFVMVERILDKILRGVSIDRLFISTFTVKAATELRERIENKLYSQIAQTTDFQMKVYLTEQLQSLGQADIGTMDAFAQKVVSRYGYSIGISSQFRIMQDKAEQDVLKQEVFSKLFSEFMNQKEAPVFRALVKNFSGNCKDTSAFRELVYTCYSFSQSTENPKIWLQENFLSAAKTYQRLEDIPDHDIELLLLAMQDTANQLRDVTDMEDYGQLTKAGSRSAKYTKHLTIIEKLSDWVRDFKCLYGKAGLDRLIRDVTGLIPSGNDVTVSKVKYPVFKTLHQKLKQFRHLETILMYQKDCFPLLEQLQDFVLAFSEAYLAVKIQESAFEFSDITHFAIKILEENTDIRQSYQQHYHEVMVDEYQDNNHMQERLLTLLSNGHNRFMVGDIKQSIYRFRQADPQIFNQKFRDYQKKTEQGKVILLKENFRSQSEVLNVSNAVFSHLMDESVGDVLYDEQHQLIAGSHAQTVPYLDRRAQLLLYNSDKDDGNAPSDSEGISFSEVTIVAKEIIKLHNDKGVPFEDITLLVSSRTRNDIISHTFNQYGIPIVTDGGQQNYLKSVEVMVMLDTLRTINNPRNDYALVALLRSPMFAFDEDDLARIALQKDNELDKDCLYDKIQRAVIGRGAHPELIHDTLLGKLNIFLKTLKSWRRYAKLGSLYDLIWKIFNDRFYFDFVASQAKAEQAQANLYALALRANQFEKSGYKGLYCFIKMIDKVLETQNDLADVEVAAPKQAVNLMTIHKSKGLQFPYVFILNCDKRFSMTDIHKSFILNRQHGIGIKYLADIKVLLGETTLNSVKVSMETLPYQLNKQELRLATLSEQMRLLYVAMTRAEKKVYFIGKASKSKSQDITDPKKLGKLLPLALREQLLTFQDWLLAIADVFSTEDLYFDVRFIEDSDLTQESVGRLQTPQLLNPDDLKDNRQSETIARALDMLEAVSQLNANYEAAIHLPTVRTPSQLKAAYEPLLEPIGVDIIEKSSRSLSDFTLPHFSKKVKVEASHIGSALHQLMQVLPLSKPINQQTLLDALREIDSNEEVKTALDLKKIESFFCDTSLGQFFQTYQKHLYREAPFAILKVDPISQEEYVLRGIIDAYFLFDDHIVLVDYKTDKYKQPIELKKRYQQQLELYAEALTQTYKLPVTKRYLVLMGGGKPEIVEV</sequence>
<protein>
    <recommendedName>
        <fullName evidence="1">ATP-dependent helicase/nuclease subunit A</fullName>
        <ecNumber evidence="1">3.1.-.-</ecNumber>
        <ecNumber evidence="1">5.6.2.4</ecNumber>
    </recommendedName>
    <alternativeName>
        <fullName evidence="1">ATP-dependent helicase/nuclease AddA</fullName>
    </alternativeName>
    <alternativeName>
        <fullName evidence="1">DNA 3'-5' helicase AddA</fullName>
    </alternativeName>
</protein>
<keyword id="KW-0067">ATP-binding</keyword>
<keyword id="KW-0227">DNA damage</keyword>
<keyword id="KW-0234">DNA repair</keyword>
<keyword id="KW-0238">DNA-binding</keyword>
<keyword id="KW-0269">Exonuclease</keyword>
<keyword id="KW-0347">Helicase</keyword>
<keyword id="KW-0378">Hydrolase</keyword>
<keyword id="KW-0413">Isomerase</keyword>
<keyword id="KW-0540">Nuclease</keyword>
<keyword id="KW-0547">Nucleotide-binding</keyword>